<accession>A5IBT2</accession>
<evidence type="ECO:0000255" key="1">
    <source>
        <dbReference type="HAMAP-Rule" id="MF_00009"/>
    </source>
</evidence>
<sequence>MTYHIDIQNATGKLLPLSEDEITKLASLALRDHKQDAELTVRLVDVEEMTYLNHTYRKKNKPTNVLAFPCSLPANIELECPLLGDVVICPEVLLAESAQFNKSLHAHWSLILIHGVLHLLGYDHIKDEEASIMQMLEAKLLAELGYANPYEVEENELE</sequence>
<reference key="1">
    <citation type="submission" date="2006-11" db="EMBL/GenBank/DDBJ databases">
        <title>Identification and characterization of a new conjugation/ type IVA secretion system (trb/tra) of L. pneumophila Corby localized on a mobile genomic island.</title>
        <authorList>
            <person name="Gloeckner G."/>
            <person name="Albert-Weissenberger C."/>
            <person name="Weinmann E."/>
            <person name="Jacobi S."/>
            <person name="Schunder E."/>
            <person name="Steinert M."/>
            <person name="Buchrieser C."/>
            <person name="Hacker J."/>
            <person name="Heuner K."/>
        </authorList>
    </citation>
    <scope>NUCLEOTIDE SEQUENCE [LARGE SCALE GENOMIC DNA]</scope>
    <source>
        <strain>Corby</strain>
    </source>
</reference>
<organism>
    <name type="scientific">Legionella pneumophila (strain Corby)</name>
    <dbReference type="NCBI Taxonomy" id="400673"/>
    <lineage>
        <taxon>Bacteria</taxon>
        <taxon>Pseudomonadati</taxon>
        <taxon>Pseudomonadota</taxon>
        <taxon>Gammaproteobacteria</taxon>
        <taxon>Legionellales</taxon>
        <taxon>Legionellaceae</taxon>
        <taxon>Legionella</taxon>
    </lineage>
</organism>
<comment type="function">
    <text evidence="1">Single strand-specific metallo-endoribonuclease involved in late-stage 70S ribosome quality control and in maturation of the 3' terminus of the 16S rRNA.</text>
</comment>
<comment type="cofactor">
    <cofactor evidence="1">
        <name>Zn(2+)</name>
        <dbReference type="ChEBI" id="CHEBI:29105"/>
    </cofactor>
    <text evidence="1">Binds 1 zinc ion.</text>
</comment>
<comment type="subcellular location">
    <subcellularLocation>
        <location evidence="1">Cytoplasm</location>
    </subcellularLocation>
</comment>
<comment type="similarity">
    <text evidence="1">Belongs to the endoribonuclease YbeY family.</text>
</comment>
<feature type="chain" id="PRO_1000000727" description="Endoribonuclease YbeY">
    <location>
        <begin position="1"/>
        <end position="158"/>
    </location>
</feature>
<feature type="binding site" evidence="1">
    <location>
        <position position="114"/>
    </location>
    <ligand>
        <name>Zn(2+)</name>
        <dbReference type="ChEBI" id="CHEBI:29105"/>
        <note>catalytic</note>
    </ligand>
</feature>
<feature type="binding site" evidence="1">
    <location>
        <position position="118"/>
    </location>
    <ligand>
        <name>Zn(2+)</name>
        <dbReference type="ChEBI" id="CHEBI:29105"/>
        <note>catalytic</note>
    </ligand>
</feature>
<feature type="binding site" evidence="1">
    <location>
        <position position="124"/>
    </location>
    <ligand>
        <name>Zn(2+)</name>
        <dbReference type="ChEBI" id="CHEBI:29105"/>
        <note>catalytic</note>
    </ligand>
</feature>
<keyword id="KW-0963">Cytoplasm</keyword>
<keyword id="KW-0255">Endonuclease</keyword>
<keyword id="KW-0378">Hydrolase</keyword>
<keyword id="KW-0479">Metal-binding</keyword>
<keyword id="KW-0540">Nuclease</keyword>
<keyword id="KW-0690">Ribosome biogenesis</keyword>
<keyword id="KW-0698">rRNA processing</keyword>
<keyword id="KW-0862">Zinc</keyword>
<name>YBEY_LEGPC</name>
<proteinExistence type="inferred from homology"/>
<gene>
    <name evidence="1" type="primary">ybeY</name>
    <name type="ordered locus">LPC_0856</name>
</gene>
<dbReference type="EC" id="3.1.-.-" evidence="1"/>
<dbReference type="EMBL" id="CP000675">
    <property type="protein sequence ID" value="ABQ54832.1"/>
    <property type="molecule type" value="Genomic_DNA"/>
</dbReference>
<dbReference type="RefSeq" id="WP_010947169.1">
    <property type="nucleotide sequence ID" value="NZ_JAPMSS010000002.1"/>
</dbReference>
<dbReference type="SMR" id="A5IBT2"/>
<dbReference type="GeneID" id="57035430"/>
<dbReference type="KEGG" id="lpc:LPC_0856"/>
<dbReference type="HOGENOM" id="CLU_106710_0_1_6"/>
<dbReference type="GO" id="GO:0005737">
    <property type="term" value="C:cytoplasm"/>
    <property type="evidence" value="ECO:0007669"/>
    <property type="project" value="UniProtKB-SubCell"/>
</dbReference>
<dbReference type="GO" id="GO:0004222">
    <property type="term" value="F:metalloendopeptidase activity"/>
    <property type="evidence" value="ECO:0007669"/>
    <property type="project" value="InterPro"/>
</dbReference>
<dbReference type="GO" id="GO:0004521">
    <property type="term" value="F:RNA endonuclease activity"/>
    <property type="evidence" value="ECO:0007669"/>
    <property type="project" value="UniProtKB-UniRule"/>
</dbReference>
<dbReference type="GO" id="GO:0008270">
    <property type="term" value="F:zinc ion binding"/>
    <property type="evidence" value="ECO:0007669"/>
    <property type="project" value="UniProtKB-UniRule"/>
</dbReference>
<dbReference type="GO" id="GO:0006364">
    <property type="term" value="P:rRNA processing"/>
    <property type="evidence" value="ECO:0007669"/>
    <property type="project" value="UniProtKB-UniRule"/>
</dbReference>
<dbReference type="Gene3D" id="3.40.390.30">
    <property type="entry name" value="Metalloproteases ('zincins'), catalytic domain"/>
    <property type="match status" value="1"/>
</dbReference>
<dbReference type="HAMAP" id="MF_00009">
    <property type="entry name" value="Endoribonucl_YbeY"/>
    <property type="match status" value="1"/>
</dbReference>
<dbReference type="InterPro" id="IPR023091">
    <property type="entry name" value="MetalPrtase_cat_dom_sf_prd"/>
</dbReference>
<dbReference type="InterPro" id="IPR002036">
    <property type="entry name" value="YbeY"/>
</dbReference>
<dbReference type="InterPro" id="IPR020549">
    <property type="entry name" value="YbeY_CS"/>
</dbReference>
<dbReference type="NCBIfam" id="TIGR00043">
    <property type="entry name" value="rRNA maturation RNase YbeY"/>
    <property type="match status" value="1"/>
</dbReference>
<dbReference type="PANTHER" id="PTHR46986">
    <property type="entry name" value="ENDORIBONUCLEASE YBEY, CHLOROPLASTIC"/>
    <property type="match status" value="1"/>
</dbReference>
<dbReference type="PANTHER" id="PTHR46986:SF1">
    <property type="entry name" value="ENDORIBONUCLEASE YBEY, CHLOROPLASTIC"/>
    <property type="match status" value="1"/>
</dbReference>
<dbReference type="Pfam" id="PF02130">
    <property type="entry name" value="YbeY"/>
    <property type="match status" value="1"/>
</dbReference>
<dbReference type="SUPFAM" id="SSF55486">
    <property type="entry name" value="Metalloproteases ('zincins'), catalytic domain"/>
    <property type="match status" value="1"/>
</dbReference>
<dbReference type="PROSITE" id="PS01306">
    <property type="entry name" value="UPF0054"/>
    <property type="match status" value="1"/>
</dbReference>
<protein>
    <recommendedName>
        <fullName evidence="1">Endoribonuclease YbeY</fullName>
        <ecNumber evidence="1">3.1.-.-</ecNumber>
    </recommendedName>
</protein>